<protein>
    <recommendedName>
        <fullName evidence="1">Leucine--tRNA ligase</fullName>
        <ecNumber evidence="1">6.1.1.4</ecNumber>
    </recommendedName>
    <alternativeName>
        <fullName evidence="1">Leucyl-tRNA synthetase</fullName>
        <shortName evidence="1">LeuRS</shortName>
    </alternativeName>
</protein>
<keyword id="KW-0030">Aminoacyl-tRNA synthetase</keyword>
<keyword id="KW-0067">ATP-binding</keyword>
<keyword id="KW-0963">Cytoplasm</keyword>
<keyword id="KW-0436">Ligase</keyword>
<keyword id="KW-0547">Nucleotide-binding</keyword>
<keyword id="KW-0648">Protein biosynthesis</keyword>
<dbReference type="EC" id="6.1.1.4" evidence="1"/>
<dbReference type="EMBL" id="CP000001">
    <property type="protein sequence ID" value="AAU15783.1"/>
    <property type="molecule type" value="Genomic_DNA"/>
</dbReference>
<dbReference type="RefSeq" id="WP_000009448.1">
    <property type="nucleotide sequence ID" value="NZ_CP009968.1"/>
</dbReference>
<dbReference type="SMR" id="Q632V2"/>
<dbReference type="GeneID" id="45024607"/>
<dbReference type="KEGG" id="bcz:BCE33L4490"/>
<dbReference type="PATRIC" id="fig|288681.22.peg.880"/>
<dbReference type="Proteomes" id="UP000002612">
    <property type="component" value="Chromosome"/>
</dbReference>
<dbReference type="GO" id="GO:0005829">
    <property type="term" value="C:cytosol"/>
    <property type="evidence" value="ECO:0007669"/>
    <property type="project" value="TreeGrafter"/>
</dbReference>
<dbReference type="GO" id="GO:0002161">
    <property type="term" value="F:aminoacyl-tRNA deacylase activity"/>
    <property type="evidence" value="ECO:0007669"/>
    <property type="project" value="InterPro"/>
</dbReference>
<dbReference type="GO" id="GO:0005524">
    <property type="term" value="F:ATP binding"/>
    <property type="evidence" value="ECO:0007669"/>
    <property type="project" value="UniProtKB-UniRule"/>
</dbReference>
<dbReference type="GO" id="GO:0004823">
    <property type="term" value="F:leucine-tRNA ligase activity"/>
    <property type="evidence" value="ECO:0007669"/>
    <property type="project" value="UniProtKB-UniRule"/>
</dbReference>
<dbReference type="GO" id="GO:0006429">
    <property type="term" value="P:leucyl-tRNA aminoacylation"/>
    <property type="evidence" value="ECO:0007669"/>
    <property type="project" value="UniProtKB-UniRule"/>
</dbReference>
<dbReference type="CDD" id="cd07958">
    <property type="entry name" value="Anticodon_Ia_Leu_BEm"/>
    <property type="match status" value="1"/>
</dbReference>
<dbReference type="CDD" id="cd00812">
    <property type="entry name" value="LeuRS_core"/>
    <property type="match status" value="1"/>
</dbReference>
<dbReference type="FunFam" id="1.10.730.10:FF:000012">
    <property type="entry name" value="Leucine--tRNA ligase"/>
    <property type="match status" value="1"/>
</dbReference>
<dbReference type="FunFam" id="1.10.730.10:FF:000018">
    <property type="entry name" value="Leucine--tRNA ligase"/>
    <property type="match status" value="1"/>
</dbReference>
<dbReference type="FunFam" id="3.10.20.590:FF:000001">
    <property type="entry name" value="Leucine--tRNA ligase"/>
    <property type="match status" value="1"/>
</dbReference>
<dbReference type="FunFam" id="3.40.50.620:FF:000056">
    <property type="entry name" value="Leucine--tRNA ligase"/>
    <property type="match status" value="1"/>
</dbReference>
<dbReference type="FunFam" id="3.40.50.620:FF:000077">
    <property type="entry name" value="Leucine--tRNA ligase"/>
    <property type="match status" value="1"/>
</dbReference>
<dbReference type="Gene3D" id="3.10.20.590">
    <property type="match status" value="1"/>
</dbReference>
<dbReference type="Gene3D" id="3.40.50.620">
    <property type="entry name" value="HUPs"/>
    <property type="match status" value="2"/>
</dbReference>
<dbReference type="Gene3D" id="1.10.730.10">
    <property type="entry name" value="Isoleucyl-tRNA Synthetase, Domain 1"/>
    <property type="match status" value="1"/>
</dbReference>
<dbReference type="HAMAP" id="MF_00049_B">
    <property type="entry name" value="Leu_tRNA_synth_B"/>
    <property type="match status" value="1"/>
</dbReference>
<dbReference type="InterPro" id="IPR001412">
    <property type="entry name" value="aa-tRNA-synth_I_CS"/>
</dbReference>
<dbReference type="InterPro" id="IPR002300">
    <property type="entry name" value="aa-tRNA-synth_Ia"/>
</dbReference>
<dbReference type="InterPro" id="IPR002302">
    <property type="entry name" value="Leu-tRNA-ligase"/>
</dbReference>
<dbReference type="InterPro" id="IPR025709">
    <property type="entry name" value="Leu_tRNA-synth_edit"/>
</dbReference>
<dbReference type="InterPro" id="IPR013155">
    <property type="entry name" value="M/V/L/I-tRNA-synth_anticd-bd"/>
</dbReference>
<dbReference type="InterPro" id="IPR015413">
    <property type="entry name" value="Methionyl/Leucyl_tRNA_Synth"/>
</dbReference>
<dbReference type="InterPro" id="IPR014729">
    <property type="entry name" value="Rossmann-like_a/b/a_fold"/>
</dbReference>
<dbReference type="InterPro" id="IPR009080">
    <property type="entry name" value="tRNAsynth_Ia_anticodon-bd"/>
</dbReference>
<dbReference type="InterPro" id="IPR009008">
    <property type="entry name" value="Val/Leu/Ile-tRNA-synth_edit"/>
</dbReference>
<dbReference type="NCBIfam" id="TIGR00396">
    <property type="entry name" value="leuS_bact"/>
    <property type="match status" value="1"/>
</dbReference>
<dbReference type="PANTHER" id="PTHR43740:SF2">
    <property type="entry name" value="LEUCINE--TRNA LIGASE, MITOCHONDRIAL"/>
    <property type="match status" value="1"/>
</dbReference>
<dbReference type="PANTHER" id="PTHR43740">
    <property type="entry name" value="LEUCYL-TRNA SYNTHETASE"/>
    <property type="match status" value="1"/>
</dbReference>
<dbReference type="Pfam" id="PF08264">
    <property type="entry name" value="Anticodon_1"/>
    <property type="match status" value="1"/>
</dbReference>
<dbReference type="Pfam" id="PF00133">
    <property type="entry name" value="tRNA-synt_1"/>
    <property type="match status" value="1"/>
</dbReference>
<dbReference type="Pfam" id="PF13603">
    <property type="entry name" value="tRNA-synt_1_2"/>
    <property type="match status" value="1"/>
</dbReference>
<dbReference type="Pfam" id="PF09334">
    <property type="entry name" value="tRNA-synt_1g"/>
    <property type="match status" value="1"/>
</dbReference>
<dbReference type="PRINTS" id="PR00985">
    <property type="entry name" value="TRNASYNTHLEU"/>
</dbReference>
<dbReference type="SUPFAM" id="SSF47323">
    <property type="entry name" value="Anticodon-binding domain of a subclass of class I aminoacyl-tRNA synthetases"/>
    <property type="match status" value="1"/>
</dbReference>
<dbReference type="SUPFAM" id="SSF52374">
    <property type="entry name" value="Nucleotidylyl transferase"/>
    <property type="match status" value="1"/>
</dbReference>
<dbReference type="SUPFAM" id="SSF50677">
    <property type="entry name" value="ValRS/IleRS/LeuRS editing domain"/>
    <property type="match status" value="1"/>
</dbReference>
<dbReference type="PROSITE" id="PS00178">
    <property type="entry name" value="AA_TRNA_LIGASE_I"/>
    <property type="match status" value="1"/>
</dbReference>
<feature type="chain" id="PRO_0000151967" description="Leucine--tRNA ligase">
    <location>
        <begin position="1"/>
        <end position="802"/>
    </location>
</feature>
<feature type="short sequence motif" description="'HIGH' region">
    <location>
        <begin position="40"/>
        <end position="51"/>
    </location>
</feature>
<feature type="short sequence motif" description="'KMSKS' region">
    <location>
        <begin position="576"/>
        <end position="580"/>
    </location>
</feature>
<feature type="binding site" evidence="1">
    <location>
        <position position="579"/>
    </location>
    <ligand>
        <name>ATP</name>
        <dbReference type="ChEBI" id="CHEBI:30616"/>
    </ligand>
</feature>
<proteinExistence type="inferred from homology"/>
<comment type="catalytic activity">
    <reaction evidence="1">
        <text>tRNA(Leu) + L-leucine + ATP = L-leucyl-tRNA(Leu) + AMP + diphosphate</text>
        <dbReference type="Rhea" id="RHEA:11688"/>
        <dbReference type="Rhea" id="RHEA-COMP:9613"/>
        <dbReference type="Rhea" id="RHEA-COMP:9622"/>
        <dbReference type="ChEBI" id="CHEBI:30616"/>
        <dbReference type="ChEBI" id="CHEBI:33019"/>
        <dbReference type="ChEBI" id="CHEBI:57427"/>
        <dbReference type="ChEBI" id="CHEBI:78442"/>
        <dbReference type="ChEBI" id="CHEBI:78494"/>
        <dbReference type="ChEBI" id="CHEBI:456215"/>
        <dbReference type="EC" id="6.1.1.4"/>
    </reaction>
</comment>
<comment type="subcellular location">
    <subcellularLocation>
        <location evidence="1">Cytoplasm</location>
    </subcellularLocation>
</comment>
<comment type="similarity">
    <text evidence="1">Belongs to the class-I aminoacyl-tRNA synthetase family.</text>
</comment>
<gene>
    <name evidence="1" type="primary">leuS</name>
    <name type="ordered locus">BCE33L4490</name>
</gene>
<accession>Q632V2</accession>
<sequence>MSFNHQEIEKKWQGYWEENKTFRTPDETEKPKFYALDMFPYPSGAGLHVGHPEGYTATDILSRMKRMQGYNVLHPMGWDAFGLPAEQYALDTGNSPAEFTEHNINTFRNQIKSLGFSYDWDREVNTTDPNYYKWTQWIFLKLFEKGLAYVDEVPVNWCPALGTVLANEEIIDGKSERGGHPVERRPMRQWMLKITAYGDRLLEDLDELDWPESLKDMQRNWIGRSEGAEVHFNIDGTDEKFTVFTTRPDTLFGASYCVLAPEHALVADITTADQKEAVEAYINSVKMKSDLERTELAKEKTGVFTGAYAVNPVNGEKLPIWIADYVLATYGTGAVMAVPAHDERDYEFASTFNLPMKEVVKGGDITKEAYTGDGAHVNSAFLDGLNKEEAIAKMIEWLEVTSAGNQKVTYRLRDWLFSRQRYWGEPIPVIHWEDGTMTAVKEEELPLVLPKTENIRPSGTGESPLANIDEWVNVVDPETGKKGRRETNTMPQWAGSCWYYLRYIDPNNSEALVDPEKVKQWLPVDIYIGGAEHAVLHLLYARFWHKVLYDIGVVPTKEPFQQLFNQGMILGENNEKMSKSKGNVVNPDDIVASHGADTLRLYEMFMGPLDASIAWSENGLDGARRFLDRVWRLFVQDNGELSEKITDAPNKDLEKAYHQTVKKVTEDYAELRFNTAISQMMVFINDAYKAETLPKEYVEGFVKMIAPVAPHIGEELWSKLGYNETITYASWPTFDESKLVEDEVEIVVQVMGKVRAKLTMSKDASKDEMEKLALEAIQDQIEGKTVRKVIVVPGKLVNVVAN</sequence>
<reference key="1">
    <citation type="journal article" date="2006" name="J. Bacteriol.">
        <title>Pathogenomic sequence analysis of Bacillus cereus and Bacillus thuringiensis isolates closely related to Bacillus anthracis.</title>
        <authorList>
            <person name="Han C.S."/>
            <person name="Xie G."/>
            <person name="Challacombe J.F."/>
            <person name="Altherr M.R."/>
            <person name="Bhotika S.S."/>
            <person name="Bruce D."/>
            <person name="Campbell C.S."/>
            <person name="Campbell M.L."/>
            <person name="Chen J."/>
            <person name="Chertkov O."/>
            <person name="Cleland C."/>
            <person name="Dimitrijevic M."/>
            <person name="Doggett N.A."/>
            <person name="Fawcett J.J."/>
            <person name="Glavina T."/>
            <person name="Goodwin L.A."/>
            <person name="Hill K.K."/>
            <person name="Hitchcock P."/>
            <person name="Jackson P.J."/>
            <person name="Keim P."/>
            <person name="Kewalramani A.R."/>
            <person name="Longmire J."/>
            <person name="Lucas S."/>
            <person name="Malfatti S."/>
            <person name="McMurry K."/>
            <person name="Meincke L.J."/>
            <person name="Misra M."/>
            <person name="Moseman B.L."/>
            <person name="Mundt M."/>
            <person name="Munk A.C."/>
            <person name="Okinaka R.T."/>
            <person name="Parson-Quintana B."/>
            <person name="Reilly L.P."/>
            <person name="Richardson P."/>
            <person name="Robinson D.L."/>
            <person name="Rubin E."/>
            <person name="Saunders E."/>
            <person name="Tapia R."/>
            <person name="Tesmer J.G."/>
            <person name="Thayer N."/>
            <person name="Thompson L.S."/>
            <person name="Tice H."/>
            <person name="Ticknor L.O."/>
            <person name="Wills P.L."/>
            <person name="Brettin T.S."/>
            <person name="Gilna P."/>
        </authorList>
    </citation>
    <scope>NUCLEOTIDE SEQUENCE [LARGE SCALE GENOMIC DNA]</scope>
    <source>
        <strain>ZK / E33L</strain>
    </source>
</reference>
<evidence type="ECO:0000255" key="1">
    <source>
        <dbReference type="HAMAP-Rule" id="MF_00049"/>
    </source>
</evidence>
<name>SYL_BACCZ</name>
<organism>
    <name type="scientific">Bacillus cereus (strain ZK / E33L)</name>
    <dbReference type="NCBI Taxonomy" id="288681"/>
    <lineage>
        <taxon>Bacteria</taxon>
        <taxon>Bacillati</taxon>
        <taxon>Bacillota</taxon>
        <taxon>Bacilli</taxon>
        <taxon>Bacillales</taxon>
        <taxon>Bacillaceae</taxon>
        <taxon>Bacillus</taxon>
        <taxon>Bacillus cereus group</taxon>
    </lineage>
</organism>